<dbReference type="EC" id="6.3.3.1" evidence="1"/>
<dbReference type="EMBL" id="CP000560">
    <property type="protein sequence ID" value="ABS73077.1"/>
    <property type="molecule type" value="Genomic_DNA"/>
</dbReference>
<dbReference type="RefSeq" id="WP_012116998.1">
    <property type="nucleotide sequence ID" value="NC_009725.2"/>
</dbReference>
<dbReference type="SMR" id="A7Z251"/>
<dbReference type="GeneID" id="93079826"/>
<dbReference type="KEGG" id="bay:RBAM_006920"/>
<dbReference type="HOGENOM" id="CLU_047116_0_0_9"/>
<dbReference type="UniPathway" id="UPA00074">
    <property type="reaction ID" value="UER00129"/>
</dbReference>
<dbReference type="Proteomes" id="UP000001120">
    <property type="component" value="Chromosome"/>
</dbReference>
<dbReference type="GO" id="GO:0005829">
    <property type="term" value="C:cytosol"/>
    <property type="evidence" value="ECO:0007669"/>
    <property type="project" value="TreeGrafter"/>
</dbReference>
<dbReference type="GO" id="GO:0005524">
    <property type="term" value="F:ATP binding"/>
    <property type="evidence" value="ECO:0007669"/>
    <property type="project" value="UniProtKB-KW"/>
</dbReference>
<dbReference type="GO" id="GO:0004637">
    <property type="term" value="F:phosphoribosylamine-glycine ligase activity"/>
    <property type="evidence" value="ECO:0007669"/>
    <property type="project" value="TreeGrafter"/>
</dbReference>
<dbReference type="GO" id="GO:0004641">
    <property type="term" value="F:phosphoribosylformylglycinamidine cyclo-ligase activity"/>
    <property type="evidence" value="ECO:0007669"/>
    <property type="project" value="UniProtKB-UniRule"/>
</dbReference>
<dbReference type="GO" id="GO:0006189">
    <property type="term" value="P:'de novo' IMP biosynthetic process"/>
    <property type="evidence" value="ECO:0007669"/>
    <property type="project" value="UniProtKB-UniRule"/>
</dbReference>
<dbReference type="GO" id="GO:0046084">
    <property type="term" value="P:adenine biosynthetic process"/>
    <property type="evidence" value="ECO:0007669"/>
    <property type="project" value="TreeGrafter"/>
</dbReference>
<dbReference type="CDD" id="cd02196">
    <property type="entry name" value="PurM"/>
    <property type="match status" value="1"/>
</dbReference>
<dbReference type="FunFam" id="3.30.1330.10:FF:000001">
    <property type="entry name" value="Phosphoribosylformylglycinamidine cyclo-ligase"/>
    <property type="match status" value="1"/>
</dbReference>
<dbReference type="FunFam" id="3.90.650.10:FF:000001">
    <property type="entry name" value="Phosphoribosylformylglycinamidine cyclo-ligase"/>
    <property type="match status" value="1"/>
</dbReference>
<dbReference type="Gene3D" id="3.90.650.10">
    <property type="entry name" value="PurM-like C-terminal domain"/>
    <property type="match status" value="1"/>
</dbReference>
<dbReference type="Gene3D" id="3.30.1330.10">
    <property type="entry name" value="PurM-like, N-terminal domain"/>
    <property type="match status" value="1"/>
</dbReference>
<dbReference type="HAMAP" id="MF_00741">
    <property type="entry name" value="AIRS"/>
    <property type="match status" value="1"/>
</dbReference>
<dbReference type="InterPro" id="IPR010918">
    <property type="entry name" value="PurM-like_C_dom"/>
</dbReference>
<dbReference type="InterPro" id="IPR036676">
    <property type="entry name" value="PurM-like_C_sf"/>
</dbReference>
<dbReference type="InterPro" id="IPR016188">
    <property type="entry name" value="PurM-like_N"/>
</dbReference>
<dbReference type="InterPro" id="IPR036921">
    <property type="entry name" value="PurM-like_N_sf"/>
</dbReference>
<dbReference type="InterPro" id="IPR004733">
    <property type="entry name" value="PurM_cligase"/>
</dbReference>
<dbReference type="NCBIfam" id="TIGR00878">
    <property type="entry name" value="purM"/>
    <property type="match status" value="1"/>
</dbReference>
<dbReference type="PANTHER" id="PTHR10520:SF12">
    <property type="entry name" value="TRIFUNCTIONAL PURINE BIOSYNTHETIC PROTEIN ADENOSINE-3"/>
    <property type="match status" value="1"/>
</dbReference>
<dbReference type="PANTHER" id="PTHR10520">
    <property type="entry name" value="TRIFUNCTIONAL PURINE BIOSYNTHETIC PROTEIN ADENOSINE-3-RELATED"/>
    <property type="match status" value="1"/>
</dbReference>
<dbReference type="Pfam" id="PF00586">
    <property type="entry name" value="AIRS"/>
    <property type="match status" value="1"/>
</dbReference>
<dbReference type="Pfam" id="PF02769">
    <property type="entry name" value="AIRS_C"/>
    <property type="match status" value="1"/>
</dbReference>
<dbReference type="SUPFAM" id="SSF56042">
    <property type="entry name" value="PurM C-terminal domain-like"/>
    <property type="match status" value="1"/>
</dbReference>
<dbReference type="SUPFAM" id="SSF55326">
    <property type="entry name" value="PurM N-terminal domain-like"/>
    <property type="match status" value="1"/>
</dbReference>
<gene>
    <name evidence="1" type="primary">purM</name>
    <name type="ordered locus">RBAM_006920</name>
</gene>
<accession>A7Z251</accession>
<sequence length="346" mass="36933">MSDAYKNAGVDIEAGYEAVKRMKKHVERTQRLGVMGSLGGFGGMFDLSELPYQKPVLISGTDGVGTKLKLAFSMDKHDTIGVDAVAMCVNDVLAQGAEPLFFLDYLAVGKADPVKIEQIVQGVADGCEQSGSALIGGETAEMPGLYTADEYDIAGFSVGVAEKDEIVTGEHIEEGHLLIGLTSSGLHSNGFSLVRKVLLDDGGLDLDTVYEPFARPLGEELLEPTRIYVKPVLKAVKSGKVDGMAHVTGGGFIENIPRMLPDGLSAEIDHGSWPIPPIFPFLQEHGKLKEEEMFNVFNMGIGFVLAVKEEDLTGVIDTLEAQGEKAYLIGRVKRGEGISFGGAALS</sequence>
<keyword id="KW-0067">ATP-binding</keyword>
<keyword id="KW-0963">Cytoplasm</keyword>
<keyword id="KW-0436">Ligase</keyword>
<keyword id="KW-0547">Nucleotide-binding</keyword>
<keyword id="KW-0658">Purine biosynthesis</keyword>
<organism>
    <name type="scientific">Bacillus velezensis (strain DSM 23117 / BGSC 10A6 / LMG 26770 / FZB42)</name>
    <name type="common">Bacillus amyloliquefaciens subsp. plantarum</name>
    <dbReference type="NCBI Taxonomy" id="326423"/>
    <lineage>
        <taxon>Bacteria</taxon>
        <taxon>Bacillati</taxon>
        <taxon>Bacillota</taxon>
        <taxon>Bacilli</taxon>
        <taxon>Bacillales</taxon>
        <taxon>Bacillaceae</taxon>
        <taxon>Bacillus</taxon>
        <taxon>Bacillus amyloliquefaciens group</taxon>
    </lineage>
</organism>
<name>PUR5_BACVZ</name>
<comment type="catalytic activity">
    <reaction evidence="1">
        <text>2-formamido-N(1)-(5-O-phospho-beta-D-ribosyl)acetamidine + ATP = 5-amino-1-(5-phospho-beta-D-ribosyl)imidazole + ADP + phosphate + H(+)</text>
        <dbReference type="Rhea" id="RHEA:23032"/>
        <dbReference type="ChEBI" id="CHEBI:15378"/>
        <dbReference type="ChEBI" id="CHEBI:30616"/>
        <dbReference type="ChEBI" id="CHEBI:43474"/>
        <dbReference type="ChEBI" id="CHEBI:137981"/>
        <dbReference type="ChEBI" id="CHEBI:147287"/>
        <dbReference type="ChEBI" id="CHEBI:456216"/>
        <dbReference type="EC" id="6.3.3.1"/>
    </reaction>
</comment>
<comment type="pathway">
    <text evidence="1">Purine metabolism; IMP biosynthesis via de novo pathway; 5-amino-1-(5-phospho-D-ribosyl)imidazole from N(2)-formyl-N(1)-(5-phospho-D-ribosyl)glycinamide: step 2/2.</text>
</comment>
<comment type="subcellular location">
    <subcellularLocation>
        <location evidence="1">Cytoplasm</location>
    </subcellularLocation>
</comment>
<comment type="similarity">
    <text evidence="1">Belongs to the AIR synthase family.</text>
</comment>
<feature type="chain" id="PRO_1000046420" description="Phosphoribosylformylglycinamidine cyclo-ligase">
    <location>
        <begin position="1"/>
        <end position="346"/>
    </location>
</feature>
<protein>
    <recommendedName>
        <fullName evidence="1">Phosphoribosylformylglycinamidine cyclo-ligase</fullName>
        <ecNumber evidence="1">6.3.3.1</ecNumber>
    </recommendedName>
    <alternativeName>
        <fullName evidence="1">AIR synthase</fullName>
    </alternativeName>
    <alternativeName>
        <fullName evidence="1">AIRS</fullName>
    </alternativeName>
    <alternativeName>
        <fullName evidence="1">Phosphoribosyl-aminoimidazole synthetase</fullName>
    </alternativeName>
</protein>
<reference key="1">
    <citation type="journal article" date="2007" name="Nat. Biotechnol.">
        <title>Comparative analysis of the complete genome sequence of the plant growth-promoting bacterium Bacillus amyloliquefaciens FZB42.</title>
        <authorList>
            <person name="Chen X.H."/>
            <person name="Koumoutsi A."/>
            <person name="Scholz R."/>
            <person name="Eisenreich A."/>
            <person name="Schneider K."/>
            <person name="Heinemeyer I."/>
            <person name="Morgenstern B."/>
            <person name="Voss B."/>
            <person name="Hess W.R."/>
            <person name="Reva O."/>
            <person name="Junge H."/>
            <person name="Voigt B."/>
            <person name="Jungblut P.R."/>
            <person name="Vater J."/>
            <person name="Suessmuth R."/>
            <person name="Liesegang H."/>
            <person name="Strittmatter A."/>
            <person name="Gottschalk G."/>
            <person name="Borriss R."/>
        </authorList>
    </citation>
    <scope>NUCLEOTIDE SEQUENCE [LARGE SCALE GENOMIC DNA]</scope>
    <source>
        <strain>DSM 23117 / BGSC 10A6 / LMG 26770 / FZB42</strain>
    </source>
</reference>
<proteinExistence type="inferred from homology"/>
<evidence type="ECO:0000255" key="1">
    <source>
        <dbReference type="HAMAP-Rule" id="MF_00741"/>
    </source>
</evidence>